<comment type="function">
    <text evidence="1">Increases the formation of ribosomal termination complexes and stimulates activities of RF-1 and RF-2. It binds guanine nucleotides and has strong preference for UGA stop codons. It may interact directly with the ribosome. The stimulation of RF-1 and RF-2 is significantly reduced by GTP and GDP, but not by GMP.</text>
</comment>
<comment type="subcellular location">
    <subcellularLocation>
        <location evidence="1">Cytoplasm</location>
    </subcellularLocation>
</comment>
<comment type="similarity">
    <text evidence="1">Belongs to the TRAFAC class translation factor GTPase superfamily. Classic translation factor GTPase family. PrfC subfamily.</text>
</comment>
<feature type="chain" id="PRO_0000210984" description="Peptide chain release factor 3">
    <location>
        <begin position="1"/>
        <end position="534"/>
    </location>
</feature>
<feature type="domain" description="tr-type G">
    <location>
        <begin position="9"/>
        <end position="278"/>
    </location>
</feature>
<feature type="binding site" evidence="1">
    <location>
        <begin position="18"/>
        <end position="25"/>
    </location>
    <ligand>
        <name>GTP</name>
        <dbReference type="ChEBI" id="CHEBI:37565"/>
    </ligand>
</feature>
<feature type="binding site" evidence="1">
    <location>
        <begin position="86"/>
        <end position="90"/>
    </location>
    <ligand>
        <name>GTP</name>
        <dbReference type="ChEBI" id="CHEBI:37565"/>
    </ligand>
</feature>
<feature type="binding site" evidence="1">
    <location>
        <begin position="140"/>
        <end position="143"/>
    </location>
    <ligand>
        <name>GTP</name>
        <dbReference type="ChEBI" id="CHEBI:37565"/>
    </ligand>
</feature>
<keyword id="KW-0963">Cytoplasm</keyword>
<keyword id="KW-0342">GTP-binding</keyword>
<keyword id="KW-0547">Nucleotide-binding</keyword>
<keyword id="KW-0648">Protein biosynthesis</keyword>
<keyword id="KW-1185">Reference proteome</keyword>
<sequence length="534" mass="58983">MSEVSNEAARRRTFAIISHPDAGKTTLTEKLLLFGGAIQMAGSVKGRKAARHATSDWMALEKERGISVTSSVMQFPYEDKIVNLLDTPGHADFGEDTYRVLTAVDSALMVIDVAKGVEERTIKLMEVCRLRDTPIMTFINKLDREGKNPIDLLDEVETVLGIQCAPVTWPIGMGQRLKGVVHLITGEVHLYEQGRNFTRQDSTIFPSLDAPGLAEKIGTQMLDELREELELVQGASNPFDLDAYRAGQQTPVFFGSGVNNFGVQPLLDFFVEHAPPPQARDTTGRRVEAVEPKLSGFVFKIQANMDPQHRDRVAFMRVCSGKFTAGMKALHVRSGKDVKLANALTFMASDREIAAEAWPGDVIGIHNHGTISIGDTFTEGESLSFTGIPNFAPELFRRARLRDPLKLKQLQKGLAQLSEEGATQFFRPLMSNDLILGAVGVLQFDVVAYRLKDEYGVDAIFEPVSVTTARWVHCDNPKKLEEFREKNAGNLGIDAAGQLVYLAPTRVNLQLAQERAPDVRFSATREHAYATAVD</sequence>
<gene>
    <name evidence="1" type="primary">prfC</name>
    <name type="ordered locus">XCC2859</name>
</gene>
<protein>
    <recommendedName>
        <fullName evidence="1">Peptide chain release factor 3</fullName>
        <shortName evidence="1">RF-3</shortName>
    </recommendedName>
</protein>
<dbReference type="EMBL" id="AE008922">
    <property type="protein sequence ID" value="AAM42131.1"/>
    <property type="molecule type" value="Genomic_DNA"/>
</dbReference>
<dbReference type="RefSeq" id="NP_638207.1">
    <property type="nucleotide sequence ID" value="NC_003902.1"/>
</dbReference>
<dbReference type="RefSeq" id="WP_011037984.1">
    <property type="nucleotide sequence ID" value="NC_003902.1"/>
</dbReference>
<dbReference type="SMR" id="Q8P6V6"/>
<dbReference type="STRING" id="190485.XCC2859"/>
<dbReference type="EnsemblBacteria" id="AAM42131">
    <property type="protein sequence ID" value="AAM42131"/>
    <property type="gene ID" value="XCC2859"/>
</dbReference>
<dbReference type="KEGG" id="xcc:XCC2859"/>
<dbReference type="PATRIC" id="fig|190485.4.peg.3061"/>
<dbReference type="eggNOG" id="COG4108">
    <property type="taxonomic scope" value="Bacteria"/>
</dbReference>
<dbReference type="HOGENOM" id="CLU_002794_2_1_6"/>
<dbReference type="OrthoDB" id="9804431at2"/>
<dbReference type="Proteomes" id="UP000001010">
    <property type="component" value="Chromosome"/>
</dbReference>
<dbReference type="GO" id="GO:0005829">
    <property type="term" value="C:cytosol"/>
    <property type="evidence" value="ECO:0000318"/>
    <property type="project" value="GO_Central"/>
</dbReference>
<dbReference type="GO" id="GO:0005525">
    <property type="term" value="F:GTP binding"/>
    <property type="evidence" value="ECO:0007669"/>
    <property type="project" value="UniProtKB-UniRule"/>
</dbReference>
<dbReference type="GO" id="GO:0003924">
    <property type="term" value="F:GTPase activity"/>
    <property type="evidence" value="ECO:0007669"/>
    <property type="project" value="InterPro"/>
</dbReference>
<dbReference type="GO" id="GO:0097216">
    <property type="term" value="F:guanosine tetraphosphate binding"/>
    <property type="evidence" value="ECO:0007669"/>
    <property type="project" value="UniProtKB-ARBA"/>
</dbReference>
<dbReference type="GO" id="GO:0016150">
    <property type="term" value="F:translation release factor activity, codon nonspecific"/>
    <property type="evidence" value="ECO:0000318"/>
    <property type="project" value="GO_Central"/>
</dbReference>
<dbReference type="GO" id="GO:0016149">
    <property type="term" value="F:translation release factor activity, codon specific"/>
    <property type="evidence" value="ECO:0007669"/>
    <property type="project" value="UniProtKB-UniRule"/>
</dbReference>
<dbReference type="GO" id="GO:0006449">
    <property type="term" value="P:regulation of translational termination"/>
    <property type="evidence" value="ECO:0007669"/>
    <property type="project" value="UniProtKB-UniRule"/>
</dbReference>
<dbReference type="GO" id="GO:0006415">
    <property type="term" value="P:translational termination"/>
    <property type="evidence" value="ECO:0000318"/>
    <property type="project" value="GO_Central"/>
</dbReference>
<dbReference type="CDD" id="cd04169">
    <property type="entry name" value="RF3"/>
    <property type="match status" value="1"/>
</dbReference>
<dbReference type="CDD" id="cd03689">
    <property type="entry name" value="RF3_II"/>
    <property type="match status" value="1"/>
</dbReference>
<dbReference type="CDD" id="cd16259">
    <property type="entry name" value="RF3_III"/>
    <property type="match status" value="1"/>
</dbReference>
<dbReference type="FunFam" id="2.40.30.10:FF:000040">
    <property type="entry name" value="Peptide chain release factor 3"/>
    <property type="match status" value="1"/>
</dbReference>
<dbReference type="FunFam" id="3.30.70.3280:FF:000001">
    <property type="entry name" value="Peptide chain release factor 3"/>
    <property type="match status" value="1"/>
</dbReference>
<dbReference type="FunFam" id="3.40.50.300:FF:000542">
    <property type="entry name" value="Peptide chain release factor 3"/>
    <property type="match status" value="1"/>
</dbReference>
<dbReference type="Gene3D" id="3.40.50.300">
    <property type="entry name" value="P-loop containing nucleotide triphosphate hydrolases"/>
    <property type="match status" value="2"/>
</dbReference>
<dbReference type="Gene3D" id="3.30.70.3280">
    <property type="entry name" value="Peptide chain release factor 3, domain III"/>
    <property type="match status" value="1"/>
</dbReference>
<dbReference type="HAMAP" id="MF_00072">
    <property type="entry name" value="Rel_fac_3"/>
    <property type="match status" value="1"/>
</dbReference>
<dbReference type="InterPro" id="IPR053905">
    <property type="entry name" value="EF-G-like_DII"/>
</dbReference>
<dbReference type="InterPro" id="IPR035647">
    <property type="entry name" value="EFG_III/V"/>
</dbReference>
<dbReference type="InterPro" id="IPR031157">
    <property type="entry name" value="G_TR_CS"/>
</dbReference>
<dbReference type="InterPro" id="IPR027417">
    <property type="entry name" value="P-loop_NTPase"/>
</dbReference>
<dbReference type="InterPro" id="IPR004548">
    <property type="entry name" value="PrfC"/>
</dbReference>
<dbReference type="InterPro" id="IPR032090">
    <property type="entry name" value="RF3_C"/>
</dbReference>
<dbReference type="InterPro" id="IPR038467">
    <property type="entry name" value="RF3_dom_3_sf"/>
</dbReference>
<dbReference type="InterPro" id="IPR041732">
    <property type="entry name" value="RF3_GTP-bd"/>
</dbReference>
<dbReference type="InterPro" id="IPR005225">
    <property type="entry name" value="Small_GTP-bd"/>
</dbReference>
<dbReference type="InterPro" id="IPR000795">
    <property type="entry name" value="T_Tr_GTP-bd_dom"/>
</dbReference>
<dbReference type="InterPro" id="IPR009000">
    <property type="entry name" value="Transl_B-barrel_sf"/>
</dbReference>
<dbReference type="NCBIfam" id="TIGR00503">
    <property type="entry name" value="prfC"/>
    <property type="match status" value="1"/>
</dbReference>
<dbReference type="NCBIfam" id="NF001964">
    <property type="entry name" value="PRK00741.1"/>
    <property type="match status" value="1"/>
</dbReference>
<dbReference type="NCBIfam" id="TIGR00231">
    <property type="entry name" value="small_GTP"/>
    <property type="match status" value="1"/>
</dbReference>
<dbReference type="PANTHER" id="PTHR43556">
    <property type="entry name" value="PEPTIDE CHAIN RELEASE FACTOR RF3"/>
    <property type="match status" value="1"/>
</dbReference>
<dbReference type="PANTHER" id="PTHR43556:SF2">
    <property type="entry name" value="PEPTIDE CHAIN RELEASE FACTOR RF3"/>
    <property type="match status" value="1"/>
</dbReference>
<dbReference type="Pfam" id="PF22042">
    <property type="entry name" value="EF-G_D2"/>
    <property type="match status" value="1"/>
</dbReference>
<dbReference type="Pfam" id="PF00009">
    <property type="entry name" value="GTP_EFTU"/>
    <property type="match status" value="1"/>
</dbReference>
<dbReference type="Pfam" id="PF16658">
    <property type="entry name" value="RF3_C"/>
    <property type="match status" value="1"/>
</dbReference>
<dbReference type="PRINTS" id="PR00315">
    <property type="entry name" value="ELONGATNFCT"/>
</dbReference>
<dbReference type="SUPFAM" id="SSF54980">
    <property type="entry name" value="EF-G C-terminal domain-like"/>
    <property type="match status" value="1"/>
</dbReference>
<dbReference type="SUPFAM" id="SSF52540">
    <property type="entry name" value="P-loop containing nucleoside triphosphate hydrolases"/>
    <property type="match status" value="1"/>
</dbReference>
<dbReference type="SUPFAM" id="SSF50447">
    <property type="entry name" value="Translation proteins"/>
    <property type="match status" value="1"/>
</dbReference>
<dbReference type="PROSITE" id="PS00301">
    <property type="entry name" value="G_TR_1"/>
    <property type="match status" value="1"/>
</dbReference>
<dbReference type="PROSITE" id="PS51722">
    <property type="entry name" value="G_TR_2"/>
    <property type="match status" value="1"/>
</dbReference>
<name>RF3_XANCP</name>
<organism>
    <name type="scientific">Xanthomonas campestris pv. campestris (strain ATCC 33913 / DSM 3586 / NCPPB 528 / LMG 568 / P 25)</name>
    <dbReference type="NCBI Taxonomy" id="190485"/>
    <lineage>
        <taxon>Bacteria</taxon>
        <taxon>Pseudomonadati</taxon>
        <taxon>Pseudomonadota</taxon>
        <taxon>Gammaproteobacteria</taxon>
        <taxon>Lysobacterales</taxon>
        <taxon>Lysobacteraceae</taxon>
        <taxon>Xanthomonas</taxon>
    </lineage>
</organism>
<reference key="1">
    <citation type="journal article" date="2002" name="Nature">
        <title>Comparison of the genomes of two Xanthomonas pathogens with differing host specificities.</title>
        <authorList>
            <person name="da Silva A.C.R."/>
            <person name="Ferro J.A."/>
            <person name="Reinach F.C."/>
            <person name="Farah C.S."/>
            <person name="Furlan L.R."/>
            <person name="Quaggio R.B."/>
            <person name="Monteiro-Vitorello C.B."/>
            <person name="Van Sluys M.A."/>
            <person name="Almeida N.F. Jr."/>
            <person name="Alves L.M.C."/>
            <person name="do Amaral A.M."/>
            <person name="Bertolini M.C."/>
            <person name="Camargo L.E.A."/>
            <person name="Camarotte G."/>
            <person name="Cannavan F."/>
            <person name="Cardozo J."/>
            <person name="Chambergo F."/>
            <person name="Ciapina L.P."/>
            <person name="Cicarelli R.M.B."/>
            <person name="Coutinho L.L."/>
            <person name="Cursino-Santos J.R."/>
            <person name="El-Dorry H."/>
            <person name="Faria J.B."/>
            <person name="Ferreira A.J.S."/>
            <person name="Ferreira R.C.C."/>
            <person name="Ferro M.I.T."/>
            <person name="Formighieri E.F."/>
            <person name="Franco M.C."/>
            <person name="Greggio C.C."/>
            <person name="Gruber A."/>
            <person name="Katsuyama A.M."/>
            <person name="Kishi L.T."/>
            <person name="Leite R.P."/>
            <person name="Lemos E.G.M."/>
            <person name="Lemos M.V.F."/>
            <person name="Locali E.C."/>
            <person name="Machado M.A."/>
            <person name="Madeira A.M.B.N."/>
            <person name="Martinez-Rossi N.M."/>
            <person name="Martins E.C."/>
            <person name="Meidanis J."/>
            <person name="Menck C.F.M."/>
            <person name="Miyaki C.Y."/>
            <person name="Moon D.H."/>
            <person name="Moreira L.M."/>
            <person name="Novo M.T.M."/>
            <person name="Okura V.K."/>
            <person name="Oliveira M.C."/>
            <person name="Oliveira V.R."/>
            <person name="Pereira H.A."/>
            <person name="Rossi A."/>
            <person name="Sena J.A.D."/>
            <person name="Silva C."/>
            <person name="de Souza R.F."/>
            <person name="Spinola L.A.F."/>
            <person name="Takita M.A."/>
            <person name="Tamura R.E."/>
            <person name="Teixeira E.C."/>
            <person name="Tezza R.I.D."/>
            <person name="Trindade dos Santos M."/>
            <person name="Truffi D."/>
            <person name="Tsai S.M."/>
            <person name="White F.F."/>
            <person name="Setubal J.C."/>
            <person name="Kitajima J.P."/>
        </authorList>
    </citation>
    <scope>NUCLEOTIDE SEQUENCE [LARGE SCALE GENOMIC DNA]</scope>
    <source>
        <strain>ATCC 33913 / DSM 3586 / NCPPB 528 / LMG 568 / P 25</strain>
    </source>
</reference>
<proteinExistence type="inferred from homology"/>
<evidence type="ECO:0000255" key="1">
    <source>
        <dbReference type="HAMAP-Rule" id="MF_00072"/>
    </source>
</evidence>
<accession>Q8P6V6</accession>